<evidence type="ECO:0000255" key="1">
    <source>
        <dbReference type="HAMAP-Rule" id="MF_00157"/>
    </source>
</evidence>
<evidence type="ECO:0000256" key="2">
    <source>
        <dbReference type="SAM" id="MobiDB-lite"/>
    </source>
</evidence>
<feature type="chain" id="PRO_1000011405" description="Ribonuclease T">
    <location>
        <begin position="1"/>
        <end position="224"/>
    </location>
</feature>
<feature type="domain" description="Exonuclease" evidence="1">
    <location>
        <begin position="32"/>
        <end position="206"/>
    </location>
</feature>
<feature type="region of interest" description="Disordered" evidence="2">
    <location>
        <begin position="1"/>
        <end position="20"/>
    </location>
</feature>
<feature type="compositionally biased region" description="Acidic residues" evidence="2">
    <location>
        <begin position="1"/>
        <end position="11"/>
    </location>
</feature>
<feature type="active site" description="Proton donor/acceptor" evidence="1">
    <location>
        <position position="193"/>
    </location>
</feature>
<feature type="binding site" evidence="1">
    <location>
        <position position="35"/>
    </location>
    <ligand>
        <name>Mg(2+)</name>
        <dbReference type="ChEBI" id="CHEBI:18420"/>
        <label>1</label>
        <note>catalytic</note>
    </ligand>
</feature>
<feature type="binding site" evidence="1">
    <location>
        <position position="35"/>
    </location>
    <ligand>
        <name>Mg(2+)</name>
        <dbReference type="ChEBI" id="CHEBI:18420"/>
        <label>2</label>
        <note>catalytic</note>
    </ligand>
</feature>
<feature type="binding site" evidence="1">
    <location>
        <position position="37"/>
    </location>
    <ligand>
        <name>Mg(2+)</name>
        <dbReference type="ChEBI" id="CHEBI:18420"/>
        <label>2</label>
        <note>catalytic</note>
    </ligand>
</feature>
<feature type="binding site" evidence="1">
    <location>
        <position position="193"/>
    </location>
    <ligand>
        <name>Mg(2+)</name>
        <dbReference type="ChEBI" id="CHEBI:18420"/>
        <label>2</label>
        <note>catalytic</note>
    </ligand>
</feature>
<feature type="binding site" evidence="1">
    <location>
        <position position="198"/>
    </location>
    <ligand>
        <name>Mg(2+)</name>
        <dbReference type="ChEBI" id="CHEBI:18420"/>
        <label>2</label>
        <note>catalytic</note>
    </ligand>
</feature>
<feature type="site" description="Important for substrate binding and specificity" evidence="1">
    <location>
        <position position="41"/>
    </location>
</feature>
<feature type="site" description="Important for substrate binding and specificity" evidence="1">
    <location>
        <position position="89"/>
    </location>
</feature>
<feature type="site" description="Important for substrate binding and specificity" evidence="1">
    <location>
        <position position="136"/>
    </location>
</feature>
<feature type="site" description="Important for substrate binding and specificity" evidence="1">
    <location>
        <position position="158"/>
    </location>
</feature>
<gene>
    <name evidence="1" type="primary">rnt</name>
    <name type="ordered locus">PSEEN1207</name>
</gene>
<protein>
    <recommendedName>
        <fullName evidence="1">Ribonuclease T</fullName>
        <ecNumber evidence="1">3.1.13.-</ecNumber>
    </recommendedName>
    <alternativeName>
        <fullName evidence="1">Exoribonuclease T</fullName>
        <shortName evidence="1">RNase T</shortName>
    </alternativeName>
</protein>
<sequence>MSEDLYEDDQDSQVSSGSRHPMAERFRGYLPVVVDVETGGFNSATDALLEIAAVTIGMDEKGFLFPEHTYFYRVEPFEGANIEAAALEFTGIKLDHPLRMAVSEESALTDIFRGVRKALKANGCKRAILVGHNSSFDLGFLNAAVARNDIKRNPFHPFSSFDTATLAGLAYGQTVLARACQSADIDFDGREAHSARYDTEKTAELFCGIVNRWKEMGGWRDFND</sequence>
<reference key="1">
    <citation type="journal article" date="2006" name="Nat. Biotechnol.">
        <title>Complete genome sequence of the entomopathogenic and metabolically versatile soil bacterium Pseudomonas entomophila.</title>
        <authorList>
            <person name="Vodovar N."/>
            <person name="Vallenet D."/>
            <person name="Cruveiller S."/>
            <person name="Rouy Z."/>
            <person name="Barbe V."/>
            <person name="Acosta C."/>
            <person name="Cattolico L."/>
            <person name="Jubin C."/>
            <person name="Lajus A."/>
            <person name="Segurens B."/>
            <person name="Vacherie B."/>
            <person name="Wincker P."/>
            <person name="Weissenbach J."/>
            <person name="Lemaitre B."/>
            <person name="Medigue C."/>
            <person name="Boccard F."/>
        </authorList>
    </citation>
    <scope>NUCLEOTIDE SEQUENCE [LARGE SCALE GENOMIC DNA]</scope>
    <source>
        <strain>L48</strain>
    </source>
</reference>
<accession>Q1IE06</accession>
<dbReference type="EC" id="3.1.13.-" evidence="1"/>
<dbReference type="EMBL" id="CT573326">
    <property type="protein sequence ID" value="CAK14102.1"/>
    <property type="molecule type" value="Genomic_DNA"/>
</dbReference>
<dbReference type="RefSeq" id="WP_011532521.1">
    <property type="nucleotide sequence ID" value="NC_008027.1"/>
</dbReference>
<dbReference type="SMR" id="Q1IE06"/>
<dbReference type="STRING" id="384676.PSEEN1207"/>
<dbReference type="GeneID" id="32804489"/>
<dbReference type="KEGG" id="pen:PSEEN1207"/>
<dbReference type="eggNOG" id="COG0847">
    <property type="taxonomic scope" value="Bacteria"/>
</dbReference>
<dbReference type="HOGENOM" id="CLU_082724_0_0_6"/>
<dbReference type="OrthoDB" id="9778264at2"/>
<dbReference type="Proteomes" id="UP000000658">
    <property type="component" value="Chromosome"/>
</dbReference>
<dbReference type="GO" id="GO:0005829">
    <property type="term" value="C:cytosol"/>
    <property type="evidence" value="ECO:0007669"/>
    <property type="project" value="TreeGrafter"/>
</dbReference>
<dbReference type="GO" id="GO:0008408">
    <property type="term" value="F:3'-5' exonuclease activity"/>
    <property type="evidence" value="ECO:0007669"/>
    <property type="project" value="TreeGrafter"/>
</dbReference>
<dbReference type="GO" id="GO:0000287">
    <property type="term" value="F:magnesium ion binding"/>
    <property type="evidence" value="ECO:0007669"/>
    <property type="project" value="UniProtKB-UniRule"/>
</dbReference>
<dbReference type="GO" id="GO:0003676">
    <property type="term" value="F:nucleic acid binding"/>
    <property type="evidence" value="ECO:0007669"/>
    <property type="project" value="InterPro"/>
</dbReference>
<dbReference type="GO" id="GO:0016896">
    <property type="term" value="F:RNA exonuclease activity, producing 5'-phosphomonoesters"/>
    <property type="evidence" value="ECO:0007669"/>
    <property type="project" value="UniProtKB-UniRule"/>
</dbReference>
<dbReference type="GO" id="GO:0045004">
    <property type="term" value="P:DNA replication proofreading"/>
    <property type="evidence" value="ECO:0007669"/>
    <property type="project" value="TreeGrafter"/>
</dbReference>
<dbReference type="GO" id="GO:0008033">
    <property type="term" value="P:tRNA processing"/>
    <property type="evidence" value="ECO:0007669"/>
    <property type="project" value="UniProtKB-KW"/>
</dbReference>
<dbReference type="CDD" id="cd06134">
    <property type="entry name" value="RNaseT"/>
    <property type="match status" value="1"/>
</dbReference>
<dbReference type="FunFam" id="3.30.420.10:FF:000009">
    <property type="entry name" value="Ribonuclease T"/>
    <property type="match status" value="1"/>
</dbReference>
<dbReference type="Gene3D" id="3.30.420.10">
    <property type="entry name" value="Ribonuclease H-like superfamily/Ribonuclease H"/>
    <property type="match status" value="1"/>
</dbReference>
<dbReference type="HAMAP" id="MF_00157">
    <property type="entry name" value="RNase_T"/>
    <property type="match status" value="1"/>
</dbReference>
<dbReference type="InterPro" id="IPR013520">
    <property type="entry name" value="Exonuclease_RNaseT/DNA_pol3"/>
</dbReference>
<dbReference type="InterPro" id="IPR005987">
    <property type="entry name" value="RNase_T"/>
</dbReference>
<dbReference type="InterPro" id="IPR012337">
    <property type="entry name" value="RNaseH-like_sf"/>
</dbReference>
<dbReference type="InterPro" id="IPR036397">
    <property type="entry name" value="RNaseH_sf"/>
</dbReference>
<dbReference type="NCBIfam" id="TIGR01298">
    <property type="entry name" value="RNaseT"/>
    <property type="match status" value="1"/>
</dbReference>
<dbReference type="PANTHER" id="PTHR30231">
    <property type="entry name" value="DNA POLYMERASE III SUBUNIT EPSILON"/>
    <property type="match status" value="1"/>
</dbReference>
<dbReference type="PANTHER" id="PTHR30231:SF2">
    <property type="entry name" value="RIBONUCLEASE T"/>
    <property type="match status" value="1"/>
</dbReference>
<dbReference type="Pfam" id="PF00929">
    <property type="entry name" value="RNase_T"/>
    <property type="match status" value="1"/>
</dbReference>
<dbReference type="SMART" id="SM00479">
    <property type="entry name" value="EXOIII"/>
    <property type="match status" value="1"/>
</dbReference>
<dbReference type="SUPFAM" id="SSF53098">
    <property type="entry name" value="Ribonuclease H-like"/>
    <property type="match status" value="1"/>
</dbReference>
<organism>
    <name type="scientific">Pseudomonas entomophila (strain L48)</name>
    <dbReference type="NCBI Taxonomy" id="384676"/>
    <lineage>
        <taxon>Bacteria</taxon>
        <taxon>Pseudomonadati</taxon>
        <taxon>Pseudomonadota</taxon>
        <taxon>Gammaproteobacteria</taxon>
        <taxon>Pseudomonadales</taxon>
        <taxon>Pseudomonadaceae</taxon>
        <taxon>Pseudomonas</taxon>
    </lineage>
</organism>
<keyword id="KW-0269">Exonuclease</keyword>
<keyword id="KW-0378">Hydrolase</keyword>
<keyword id="KW-0460">Magnesium</keyword>
<keyword id="KW-0479">Metal-binding</keyword>
<keyword id="KW-0540">Nuclease</keyword>
<keyword id="KW-0819">tRNA processing</keyword>
<name>RNT_PSEE4</name>
<proteinExistence type="inferred from homology"/>
<comment type="function">
    <text evidence="1">Trims short 3' overhangs of a variety of RNA species, leaving a one or two nucleotide 3' overhang. Responsible for the end-turnover of tRNA: specifically removes the terminal AMP residue from uncharged tRNA (tRNA-C-C-A). Also appears to be involved in tRNA biosynthesis.</text>
</comment>
<comment type="cofactor">
    <cofactor evidence="1">
        <name>Mg(2+)</name>
        <dbReference type="ChEBI" id="CHEBI:18420"/>
    </cofactor>
    <text evidence="1">Binds two Mg(2+) per subunit. The active form of the enzyme binds two Mg(2+) ions in its active site. The first Mg(2+) forms only one salt bridge with the protein.</text>
</comment>
<comment type="subunit">
    <text evidence="1">Homodimer.</text>
</comment>
<comment type="similarity">
    <text evidence="1">Belongs to the RNase T family.</text>
</comment>